<feature type="chain" id="PRO_1000133070" description="Phosphopentomutase">
    <location>
        <begin position="1"/>
        <end position="407"/>
    </location>
</feature>
<feature type="binding site" evidence="1">
    <location>
        <position position="10"/>
    </location>
    <ligand>
        <name>Mn(2+)</name>
        <dbReference type="ChEBI" id="CHEBI:29035"/>
        <label>1</label>
    </ligand>
</feature>
<feature type="binding site" evidence="1">
    <location>
        <position position="306"/>
    </location>
    <ligand>
        <name>Mn(2+)</name>
        <dbReference type="ChEBI" id="CHEBI:29035"/>
        <label>2</label>
    </ligand>
</feature>
<feature type="binding site" evidence="1">
    <location>
        <position position="311"/>
    </location>
    <ligand>
        <name>Mn(2+)</name>
        <dbReference type="ChEBI" id="CHEBI:29035"/>
        <label>2</label>
    </ligand>
</feature>
<feature type="binding site" evidence="1">
    <location>
        <position position="347"/>
    </location>
    <ligand>
        <name>Mn(2+)</name>
        <dbReference type="ChEBI" id="CHEBI:29035"/>
        <label>1</label>
    </ligand>
</feature>
<feature type="binding site" evidence="1">
    <location>
        <position position="348"/>
    </location>
    <ligand>
        <name>Mn(2+)</name>
        <dbReference type="ChEBI" id="CHEBI:29035"/>
        <label>1</label>
    </ligand>
</feature>
<feature type="binding site" evidence="1">
    <location>
        <position position="359"/>
    </location>
    <ligand>
        <name>Mn(2+)</name>
        <dbReference type="ChEBI" id="CHEBI:29035"/>
        <label>2</label>
    </ligand>
</feature>
<evidence type="ECO:0000255" key="1">
    <source>
        <dbReference type="HAMAP-Rule" id="MF_00740"/>
    </source>
</evidence>
<accession>B7NW63</accession>
<comment type="function">
    <text evidence="1">Isomerase that catalyzes the conversion of deoxy-ribose 1-phosphate (dRib-1-P) and ribose 1-phosphate (Rib-1-P) to deoxy-ribose 5-phosphate (dRib-5-P) and ribose 5-phosphate (Rib-5-P), respectively.</text>
</comment>
<comment type="catalytic activity">
    <reaction evidence="1">
        <text>2-deoxy-alpha-D-ribose 1-phosphate = 2-deoxy-D-ribose 5-phosphate</text>
        <dbReference type="Rhea" id="RHEA:27658"/>
        <dbReference type="ChEBI" id="CHEBI:57259"/>
        <dbReference type="ChEBI" id="CHEBI:62877"/>
        <dbReference type="EC" id="5.4.2.7"/>
    </reaction>
</comment>
<comment type="catalytic activity">
    <reaction evidence="1">
        <text>alpha-D-ribose 1-phosphate = D-ribose 5-phosphate</text>
        <dbReference type="Rhea" id="RHEA:18793"/>
        <dbReference type="ChEBI" id="CHEBI:57720"/>
        <dbReference type="ChEBI" id="CHEBI:78346"/>
        <dbReference type="EC" id="5.4.2.7"/>
    </reaction>
</comment>
<comment type="cofactor">
    <cofactor evidence="1">
        <name>Mn(2+)</name>
        <dbReference type="ChEBI" id="CHEBI:29035"/>
    </cofactor>
    <text evidence="1">Binds 2 manganese ions.</text>
</comment>
<comment type="pathway">
    <text evidence="1">Carbohydrate degradation; 2-deoxy-D-ribose 1-phosphate degradation; D-glyceraldehyde 3-phosphate and acetaldehyde from 2-deoxy-alpha-D-ribose 1-phosphate: step 1/2.</text>
</comment>
<comment type="subcellular location">
    <subcellularLocation>
        <location evidence="1">Cytoplasm</location>
    </subcellularLocation>
</comment>
<comment type="similarity">
    <text evidence="1">Belongs to the phosphopentomutase family.</text>
</comment>
<reference key="1">
    <citation type="journal article" date="2009" name="PLoS Genet.">
        <title>Organised genome dynamics in the Escherichia coli species results in highly diverse adaptive paths.</title>
        <authorList>
            <person name="Touchon M."/>
            <person name="Hoede C."/>
            <person name="Tenaillon O."/>
            <person name="Barbe V."/>
            <person name="Baeriswyl S."/>
            <person name="Bidet P."/>
            <person name="Bingen E."/>
            <person name="Bonacorsi S."/>
            <person name="Bouchier C."/>
            <person name="Bouvet O."/>
            <person name="Calteau A."/>
            <person name="Chiapello H."/>
            <person name="Clermont O."/>
            <person name="Cruveiller S."/>
            <person name="Danchin A."/>
            <person name="Diard M."/>
            <person name="Dossat C."/>
            <person name="Karoui M.E."/>
            <person name="Frapy E."/>
            <person name="Garry L."/>
            <person name="Ghigo J.M."/>
            <person name="Gilles A.M."/>
            <person name="Johnson J."/>
            <person name="Le Bouguenec C."/>
            <person name="Lescat M."/>
            <person name="Mangenot S."/>
            <person name="Martinez-Jehanne V."/>
            <person name="Matic I."/>
            <person name="Nassif X."/>
            <person name="Oztas S."/>
            <person name="Petit M.A."/>
            <person name="Pichon C."/>
            <person name="Rouy Z."/>
            <person name="Ruf C.S."/>
            <person name="Schneider D."/>
            <person name="Tourret J."/>
            <person name="Vacherie B."/>
            <person name="Vallenet D."/>
            <person name="Medigue C."/>
            <person name="Rocha E.P.C."/>
            <person name="Denamur E."/>
        </authorList>
    </citation>
    <scope>NUCLEOTIDE SEQUENCE [LARGE SCALE GENOMIC DNA]</scope>
    <source>
        <strain>IAI39 / ExPEC</strain>
    </source>
</reference>
<proteinExistence type="inferred from homology"/>
<name>DEOB_ECO7I</name>
<sequence>MKRAFIMVLDSFGIGATEDAERFGDVGADTLGHIAEACAKGEADNGRKGPLNLPNLTRLGLAKAHEGSTGFIPAGMDGNAEVIGAYAWAHEMSSGKDTPSGHWEIAGVPVLFEWGYFSDHENSFPQELLDKLVERANLPGYLGNCHSSGTVILDQLGEEHMKTGKPIFYTSADSVFQIACHEETFGLDKLYELCEIAREELTNGGYNIGRVIARPFIGDKAGNFQRTGNRHDLAVEPPAPTVLQKLVDEKHGQVVSVGKIADIYANCGITKKVKATGLDALFDATIKEMKEAGDNTIVFTNFVDFDSSWGHRRDVAGYAAGLELFDRRLPELMSLLRDDDILILTADHGCDPTWTGTDHTREHIPVLVYGPKVKPGSLGHRETFADIGQTLAKYFGTSDMEYGKAMF</sequence>
<keyword id="KW-0963">Cytoplasm</keyword>
<keyword id="KW-0413">Isomerase</keyword>
<keyword id="KW-0464">Manganese</keyword>
<keyword id="KW-0479">Metal-binding</keyword>
<gene>
    <name evidence="1" type="primary">deoB</name>
    <name type="ordered locus">ECIAI39_4915</name>
</gene>
<organism>
    <name type="scientific">Escherichia coli O7:K1 (strain IAI39 / ExPEC)</name>
    <dbReference type="NCBI Taxonomy" id="585057"/>
    <lineage>
        <taxon>Bacteria</taxon>
        <taxon>Pseudomonadati</taxon>
        <taxon>Pseudomonadota</taxon>
        <taxon>Gammaproteobacteria</taxon>
        <taxon>Enterobacterales</taxon>
        <taxon>Enterobacteriaceae</taxon>
        <taxon>Escherichia</taxon>
    </lineage>
</organism>
<protein>
    <recommendedName>
        <fullName evidence="1">Phosphopentomutase</fullName>
        <ecNumber evidence="1">5.4.2.7</ecNumber>
    </recommendedName>
    <alternativeName>
        <fullName evidence="1">Phosphodeoxyribomutase</fullName>
    </alternativeName>
</protein>
<dbReference type="EC" id="5.4.2.7" evidence="1"/>
<dbReference type="EMBL" id="CU928164">
    <property type="protein sequence ID" value="CAR21011.1"/>
    <property type="molecule type" value="Genomic_DNA"/>
</dbReference>
<dbReference type="RefSeq" id="WP_000816471.1">
    <property type="nucleotide sequence ID" value="NC_011750.1"/>
</dbReference>
<dbReference type="RefSeq" id="YP_002410760.1">
    <property type="nucleotide sequence ID" value="NC_011750.1"/>
</dbReference>
<dbReference type="SMR" id="B7NW63"/>
<dbReference type="STRING" id="585057.ECIAI39_4915"/>
<dbReference type="GeneID" id="89519362"/>
<dbReference type="KEGG" id="ect:ECIAI39_4915"/>
<dbReference type="PATRIC" id="fig|585057.6.peg.5077"/>
<dbReference type="HOGENOM" id="CLU_053861_0_0_6"/>
<dbReference type="UniPathway" id="UPA00002">
    <property type="reaction ID" value="UER00467"/>
</dbReference>
<dbReference type="Proteomes" id="UP000000749">
    <property type="component" value="Chromosome"/>
</dbReference>
<dbReference type="GO" id="GO:0005829">
    <property type="term" value="C:cytosol"/>
    <property type="evidence" value="ECO:0007669"/>
    <property type="project" value="TreeGrafter"/>
</dbReference>
<dbReference type="GO" id="GO:0000287">
    <property type="term" value="F:magnesium ion binding"/>
    <property type="evidence" value="ECO:0007669"/>
    <property type="project" value="InterPro"/>
</dbReference>
<dbReference type="GO" id="GO:0030145">
    <property type="term" value="F:manganese ion binding"/>
    <property type="evidence" value="ECO:0007669"/>
    <property type="project" value="UniProtKB-UniRule"/>
</dbReference>
<dbReference type="GO" id="GO:0008973">
    <property type="term" value="F:phosphopentomutase activity"/>
    <property type="evidence" value="ECO:0007669"/>
    <property type="project" value="UniProtKB-UniRule"/>
</dbReference>
<dbReference type="GO" id="GO:0006018">
    <property type="term" value="P:2-deoxyribose 1-phosphate catabolic process"/>
    <property type="evidence" value="ECO:0007669"/>
    <property type="project" value="UniProtKB-UniRule"/>
</dbReference>
<dbReference type="GO" id="GO:0006015">
    <property type="term" value="P:5-phosphoribose 1-diphosphate biosynthetic process"/>
    <property type="evidence" value="ECO:0007669"/>
    <property type="project" value="UniProtKB-UniPathway"/>
</dbReference>
<dbReference type="GO" id="GO:0043094">
    <property type="term" value="P:metabolic compound salvage"/>
    <property type="evidence" value="ECO:0007669"/>
    <property type="project" value="InterPro"/>
</dbReference>
<dbReference type="GO" id="GO:0009117">
    <property type="term" value="P:nucleotide metabolic process"/>
    <property type="evidence" value="ECO:0007669"/>
    <property type="project" value="InterPro"/>
</dbReference>
<dbReference type="CDD" id="cd16009">
    <property type="entry name" value="PPM"/>
    <property type="match status" value="1"/>
</dbReference>
<dbReference type="FunFam" id="3.30.70.1250:FF:000001">
    <property type="entry name" value="Phosphopentomutase"/>
    <property type="match status" value="1"/>
</dbReference>
<dbReference type="Gene3D" id="3.40.720.10">
    <property type="entry name" value="Alkaline Phosphatase, subunit A"/>
    <property type="match status" value="1"/>
</dbReference>
<dbReference type="Gene3D" id="3.30.70.1250">
    <property type="entry name" value="Phosphopentomutase"/>
    <property type="match status" value="1"/>
</dbReference>
<dbReference type="HAMAP" id="MF_00740">
    <property type="entry name" value="Phosphopentomut"/>
    <property type="match status" value="1"/>
</dbReference>
<dbReference type="InterPro" id="IPR017850">
    <property type="entry name" value="Alkaline_phosphatase_core_sf"/>
</dbReference>
<dbReference type="InterPro" id="IPR010045">
    <property type="entry name" value="DeoB"/>
</dbReference>
<dbReference type="InterPro" id="IPR006124">
    <property type="entry name" value="Metalloenzyme"/>
</dbReference>
<dbReference type="InterPro" id="IPR024052">
    <property type="entry name" value="Phosphopentomutase_DeoB_cap_sf"/>
</dbReference>
<dbReference type="NCBIfam" id="TIGR01696">
    <property type="entry name" value="deoB"/>
    <property type="match status" value="1"/>
</dbReference>
<dbReference type="NCBIfam" id="NF003766">
    <property type="entry name" value="PRK05362.1"/>
    <property type="match status" value="1"/>
</dbReference>
<dbReference type="PANTHER" id="PTHR21110">
    <property type="entry name" value="PHOSPHOPENTOMUTASE"/>
    <property type="match status" value="1"/>
</dbReference>
<dbReference type="PANTHER" id="PTHR21110:SF0">
    <property type="entry name" value="PHOSPHOPENTOMUTASE"/>
    <property type="match status" value="1"/>
</dbReference>
<dbReference type="Pfam" id="PF01676">
    <property type="entry name" value="Metalloenzyme"/>
    <property type="match status" value="1"/>
</dbReference>
<dbReference type="PIRSF" id="PIRSF001491">
    <property type="entry name" value="Ppentomutase"/>
    <property type="match status" value="1"/>
</dbReference>
<dbReference type="SUPFAM" id="SSF53649">
    <property type="entry name" value="Alkaline phosphatase-like"/>
    <property type="match status" value="1"/>
</dbReference>
<dbReference type="SUPFAM" id="SSF143856">
    <property type="entry name" value="DeoB insert domain-like"/>
    <property type="match status" value="1"/>
</dbReference>